<accession>Q5R6E1</accession>
<name>FBXL5_PONAB</name>
<sequence length="691" mass="78553">MAPFPEEVDVFTAPHWRTKQLVGLYCDKLSKTNFSNNNDFRALLQSLYATFKEFKMHEQIENEYIIGLLQQRSQTIYNVHSDNKLSEMLSLFEKGLKNVKNEYEQLNYAKQLKERLEAFTRDFLPHMKEEEEVFQPMLMEYFTYEELKDIKKKVIAQHCSQKDTAELLRGLSLWNHAEERQKFFKYSVDEKSDKEAEVSEHSTGITHLPPEVMLSIFSYLNPQELCRCSQVSMKWSQLTKTGSLWKHLYPVHWARGDWYSGPATGLDTEPDEEWVKNRKDESRAFHEWDEDADIDESEESVEESIAISIAQMEKRLLHGLIHNVLPYVGTSVKTLVLAYSSAVSSKMVRQILELCPNLEHLDLTQTDISDSAFDSWSWLGCCQSLRHLDLSGCEKITDVALEKISRALGILTSHQSGFLKTSTSKITSTTWKNKDVTMQSTKQYAYLHDLTNKGIGEEIDNEHPWTKPVSSENFTSPYLWMLDAEDLADIEDTVEWRHRNVESLCVVETASNFSCSTSGCFSKDIVGLRTSVCWQQHCASPAFAYCGHSFCCTGTALRTMSALPESSAMCRKASRTRLPRGKDLIYFGSEKSDQETGRVLLFLSLSGCYQITDHGLRVLTLGGGLPYLEHLNLSGCLTITGAGLQDLVSACPSLNDEYFYYCDNINGPHADTASGCQNLQCGFRACCRSGE</sequence>
<evidence type="ECO:0000250" key="1"/>
<evidence type="ECO:0000250" key="2">
    <source>
        <dbReference type="UniProtKB" id="Q9UKA1"/>
    </source>
</evidence>
<evidence type="ECO:0000255" key="3">
    <source>
        <dbReference type="PROSITE-ProRule" id="PRU00080"/>
    </source>
</evidence>
<feature type="chain" id="PRO_0000390465" description="F-box/LRR-repeat protein 5">
    <location>
        <begin position="1"/>
        <end position="691"/>
    </location>
</feature>
<feature type="domain" description="F-box" evidence="3">
    <location>
        <begin position="202"/>
        <end position="248"/>
    </location>
</feature>
<feature type="repeat" description="LRR 1">
    <location>
        <begin position="340"/>
        <end position="364"/>
    </location>
</feature>
<feature type="repeat" description="LRR 2">
    <location>
        <begin position="365"/>
        <end position="392"/>
    </location>
</feature>
<feature type="repeat" description="LRR 3">
    <location>
        <begin position="393"/>
        <end position="418"/>
    </location>
</feature>
<feature type="repeat" description="LRR 4">
    <location>
        <begin position="479"/>
        <end position="508"/>
    </location>
</feature>
<feature type="repeat" description="LRR 5">
    <location>
        <begin position="576"/>
        <end position="607"/>
    </location>
</feature>
<feature type="repeat" description="LRR 6">
    <location>
        <begin position="608"/>
        <end position="635"/>
    </location>
</feature>
<feature type="repeat" description="LRR 7">
    <location>
        <begin position="636"/>
        <end position="661"/>
    </location>
</feature>
<feature type="region of interest" description="Hemerythrin-like" evidence="2">
    <location>
        <begin position="1"/>
        <end position="159"/>
    </location>
</feature>
<feature type="binding site" evidence="2">
    <location>
        <position position="15"/>
    </location>
    <ligand>
        <name>Fe(3+)</name>
        <dbReference type="ChEBI" id="CHEBI:29034"/>
        <label>1</label>
    </ligand>
</feature>
<feature type="binding site" evidence="2">
    <location>
        <position position="57"/>
    </location>
    <ligand>
        <name>Fe(3+)</name>
        <dbReference type="ChEBI" id="CHEBI:29034"/>
        <label>1</label>
    </ligand>
</feature>
<feature type="binding site" evidence="2">
    <location>
        <position position="58"/>
    </location>
    <ligand>
        <name>Fe(3+)</name>
        <dbReference type="ChEBI" id="CHEBI:29034"/>
        <label>2</label>
    </ligand>
</feature>
<feature type="binding site" evidence="2">
    <location>
        <position position="61"/>
    </location>
    <ligand>
        <name>Fe(3+)</name>
        <dbReference type="ChEBI" id="CHEBI:29034"/>
        <label>1</label>
    </ligand>
</feature>
<feature type="binding site" evidence="2">
    <location>
        <position position="61"/>
    </location>
    <ligand>
        <name>Fe(3+)</name>
        <dbReference type="ChEBI" id="CHEBI:29034"/>
        <label>2</label>
    </ligand>
</feature>
<feature type="binding site" evidence="2">
    <location>
        <position position="80"/>
    </location>
    <ligand>
        <name>Fe(3+)</name>
        <dbReference type="ChEBI" id="CHEBI:29034"/>
        <label>2</label>
    </ligand>
</feature>
<feature type="binding site" evidence="2">
    <location>
        <position position="126"/>
    </location>
    <ligand>
        <name>Fe(3+)</name>
        <dbReference type="ChEBI" id="CHEBI:29034"/>
        <label>2</label>
    </ligand>
</feature>
<feature type="binding site" evidence="2">
    <location>
        <position position="130"/>
    </location>
    <ligand>
        <name>Fe(3+)</name>
        <dbReference type="ChEBI" id="CHEBI:29034"/>
        <label>1</label>
    </ligand>
</feature>
<feature type="binding site" evidence="2">
    <location>
        <position position="130"/>
    </location>
    <ligand>
        <name>Fe(3+)</name>
        <dbReference type="ChEBI" id="CHEBI:29034"/>
        <label>2</label>
    </ligand>
</feature>
<feature type="binding site" evidence="2">
    <location>
        <position position="662"/>
    </location>
    <ligand>
        <name>[2Fe-2S] cluster</name>
        <dbReference type="ChEBI" id="CHEBI:190135"/>
    </ligand>
</feature>
<feature type="binding site" evidence="2">
    <location>
        <position position="676"/>
    </location>
    <ligand>
        <name>[2Fe-2S] cluster</name>
        <dbReference type="ChEBI" id="CHEBI:190135"/>
    </ligand>
</feature>
<feature type="binding site" evidence="2">
    <location>
        <position position="686"/>
    </location>
    <ligand>
        <name>[2Fe-2S] cluster</name>
        <dbReference type="ChEBI" id="CHEBI:190135"/>
    </ligand>
</feature>
<feature type="binding site" evidence="2">
    <location>
        <position position="687"/>
    </location>
    <ligand>
        <name>[2Fe-2S] cluster</name>
        <dbReference type="ChEBI" id="CHEBI:190135"/>
    </ligand>
</feature>
<gene>
    <name type="primary">FBXL5</name>
</gene>
<keyword id="KW-0963">Cytoplasm</keyword>
<keyword id="KW-0408">Iron</keyword>
<keyword id="KW-0411">Iron-sulfur</keyword>
<keyword id="KW-0433">Leucine-rich repeat</keyword>
<keyword id="KW-0479">Metal-binding</keyword>
<keyword id="KW-0539">Nucleus</keyword>
<keyword id="KW-1185">Reference proteome</keyword>
<keyword id="KW-0677">Repeat</keyword>
<keyword id="KW-0832">Ubl conjugation</keyword>
<keyword id="KW-0833">Ubl conjugation pathway</keyword>
<protein>
    <recommendedName>
        <fullName>F-box/LRR-repeat protein 5</fullName>
    </recommendedName>
    <alternativeName>
        <fullName>F-box and leucine-rich repeat protein 5</fullName>
    </alternativeName>
</protein>
<dbReference type="EMBL" id="CR860550">
    <property type="protein sequence ID" value="CAH92675.1"/>
    <property type="molecule type" value="mRNA"/>
</dbReference>
<dbReference type="RefSeq" id="NP_001126565.1">
    <property type="nucleotide sequence ID" value="NM_001133093.1"/>
</dbReference>
<dbReference type="SMR" id="Q5R6E1"/>
<dbReference type="FunCoup" id="Q5R6E1">
    <property type="interactions" value="548"/>
</dbReference>
<dbReference type="STRING" id="9601.ENSPPYP00000016331"/>
<dbReference type="GeneID" id="100173556"/>
<dbReference type="KEGG" id="pon:100173556"/>
<dbReference type="CTD" id="26234"/>
<dbReference type="eggNOG" id="ENOG502QS5I">
    <property type="taxonomic scope" value="Eukaryota"/>
</dbReference>
<dbReference type="InParanoid" id="Q5R6E1"/>
<dbReference type="OrthoDB" id="10257471at2759"/>
<dbReference type="UniPathway" id="UPA00143"/>
<dbReference type="Proteomes" id="UP000001595">
    <property type="component" value="Unplaced"/>
</dbReference>
<dbReference type="GO" id="GO:0005634">
    <property type="term" value="C:nucleus"/>
    <property type="evidence" value="ECO:0007669"/>
    <property type="project" value="UniProtKB-SubCell"/>
</dbReference>
<dbReference type="GO" id="GO:0048471">
    <property type="term" value="C:perinuclear region of cytoplasm"/>
    <property type="evidence" value="ECO:0000250"/>
    <property type="project" value="UniProtKB"/>
</dbReference>
<dbReference type="GO" id="GO:0019005">
    <property type="term" value="C:SCF ubiquitin ligase complex"/>
    <property type="evidence" value="ECO:0000250"/>
    <property type="project" value="UniProtKB"/>
</dbReference>
<dbReference type="GO" id="GO:0005506">
    <property type="term" value="F:iron ion binding"/>
    <property type="evidence" value="ECO:0000250"/>
    <property type="project" value="UniProtKB"/>
</dbReference>
<dbReference type="GO" id="GO:0051536">
    <property type="term" value="F:iron-sulfur cluster binding"/>
    <property type="evidence" value="ECO:0007669"/>
    <property type="project" value="UniProtKB-KW"/>
</dbReference>
<dbReference type="GO" id="GO:0006879">
    <property type="term" value="P:intracellular iron ion homeostasis"/>
    <property type="evidence" value="ECO:0000250"/>
    <property type="project" value="UniProtKB"/>
</dbReference>
<dbReference type="GO" id="GO:0016567">
    <property type="term" value="P:protein ubiquitination"/>
    <property type="evidence" value="ECO:0000250"/>
    <property type="project" value="UniProtKB"/>
</dbReference>
<dbReference type="GO" id="GO:0031146">
    <property type="term" value="P:SCF-dependent proteasomal ubiquitin-dependent protein catabolic process"/>
    <property type="evidence" value="ECO:0000250"/>
    <property type="project" value="UniProtKB"/>
</dbReference>
<dbReference type="CDD" id="cd22118">
    <property type="entry name" value="F-box_FBXL5"/>
    <property type="match status" value="1"/>
</dbReference>
<dbReference type="CDD" id="cd12109">
    <property type="entry name" value="Hr_FBXL5"/>
    <property type="match status" value="1"/>
</dbReference>
<dbReference type="FunFam" id="1.20.1280.50:FF:000007">
    <property type="entry name" value="F-box/LRR-repeat protein 5 isoform X1"/>
    <property type="match status" value="1"/>
</dbReference>
<dbReference type="FunFam" id="3.80.10.10:FF:000086">
    <property type="entry name" value="F-box/LRR-repeat protein 5 isoform X1"/>
    <property type="match status" value="1"/>
</dbReference>
<dbReference type="FunFam" id="3.80.10.10:FF:000106">
    <property type="entry name" value="F-box/LRR-repeat protein 5 isoform X1"/>
    <property type="match status" value="1"/>
</dbReference>
<dbReference type="FunFam" id="1.20.120.520:FF:000002">
    <property type="entry name" value="F-box/LRR-repeat protein 5 isoform X2"/>
    <property type="match status" value="1"/>
</dbReference>
<dbReference type="Gene3D" id="1.20.1280.50">
    <property type="match status" value="1"/>
</dbReference>
<dbReference type="Gene3D" id="1.20.120.520">
    <property type="entry name" value="nmb1532 protein domain like"/>
    <property type="match status" value="1"/>
</dbReference>
<dbReference type="Gene3D" id="3.80.10.10">
    <property type="entry name" value="Ribonuclease Inhibitor"/>
    <property type="match status" value="2"/>
</dbReference>
<dbReference type="InterPro" id="IPR036047">
    <property type="entry name" value="F-box-like_dom_sf"/>
</dbReference>
<dbReference type="InterPro" id="IPR001810">
    <property type="entry name" value="F-box_dom"/>
</dbReference>
<dbReference type="InterPro" id="IPR012312">
    <property type="entry name" value="Hemerythrin-like"/>
</dbReference>
<dbReference type="InterPro" id="IPR045808">
    <property type="entry name" value="Hr_FBXL5"/>
</dbReference>
<dbReference type="InterPro" id="IPR001611">
    <property type="entry name" value="Leu-rich_rpt"/>
</dbReference>
<dbReference type="InterPro" id="IPR006553">
    <property type="entry name" value="Leu-rich_rpt_Cys-con_subtyp"/>
</dbReference>
<dbReference type="InterPro" id="IPR032675">
    <property type="entry name" value="LRR_dom_sf"/>
</dbReference>
<dbReference type="PANTHER" id="PTHR13318:SF19">
    <property type="entry name" value="F-BOX_LRR-REPEAT PROTEIN 5"/>
    <property type="match status" value="1"/>
</dbReference>
<dbReference type="PANTHER" id="PTHR13318">
    <property type="entry name" value="PARTNER OF PAIRED, ISOFORM B-RELATED"/>
    <property type="match status" value="1"/>
</dbReference>
<dbReference type="Pfam" id="PF12937">
    <property type="entry name" value="F-box-like"/>
    <property type="match status" value="1"/>
</dbReference>
<dbReference type="Pfam" id="PF01814">
    <property type="entry name" value="Hemerythrin"/>
    <property type="match status" value="1"/>
</dbReference>
<dbReference type="Pfam" id="PF13516">
    <property type="entry name" value="LRR_6"/>
    <property type="match status" value="3"/>
</dbReference>
<dbReference type="SMART" id="SM00256">
    <property type="entry name" value="FBOX"/>
    <property type="match status" value="1"/>
</dbReference>
<dbReference type="SMART" id="SM00367">
    <property type="entry name" value="LRR_CC"/>
    <property type="match status" value="4"/>
</dbReference>
<dbReference type="SUPFAM" id="SSF81383">
    <property type="entry name" value="F-box domain"/>
    <property type="match status" value="1"/>
</dbReference>
<dbReference type="SUPFAM" id="SSF52047">
    <property type="entry name" value="RNI-like"/>
    <property type="match status" value="1"/>
</dbReference>
<dbReference type="PROSITE" id="PS50181">
    <property type="entry name" value="FBOX"/>
    <property type="match status" value="1"/>
</dbReference>
<organism>
    <name type="scientific">Pongo abelii</name>
    <name type="common">Sumatran orangutan</name>
    <name type="synonym">Pongo pygmaeus abelii</name>
    <dbReference type="NCBI Taxonomy" id="9601"/>
    <lineage>
        <taxon>Eukaryota</taxon>
        <taxon>Metazoa</taxon>
        <taxon>Chordata</taxon>
        <taxon>Craniata</taxon>
        <taxon>Vertebrata</taxon>
        <taxon>Euteleostomi</taxon>
        <taxon>Mammalia</taxon>
        <taxon>Eutheria</taxon>
        <taxon>Euarchontoglires</taxon>
        <taxon>Primates</taxon>
        <taxon>Haplorrhini</taxon>
        <taxon>Catarrhini</taxon>
        <taxon>Hominidae</taxon>
        <taxon>Pongo</taxon>
    </lineage>
</organism>
<proteinExistence type="evidence at transcript level"/>
<comment type="function">
    <text evidence="2">Component of some SCF (SKP1-cullin-F-box) protein ligase complex that plays a central role in iron homeostasis by promoting the ubiquitination and subsequent degradation of IREB2/IRP2. The C-terminal domain of FBXL5 contains a redox-sensitive [2Fe-2S] cluster that, upon oxidation, promotes binding to IRP2 to effect its oxygen-dependent degradation. Under iron deficiency conditions, the N-terminal hemerythrin-like (Hr) region, which contains a diiron metal center, cannot bind iron and undergoes conformational changes that destabilize the FBXL5 protein and cause its ubiquitination and degradation. When intracellular iron levels start rising, the Hr region is stabilized. Additional increases in iron levels facilitate the assembly and incorporation of a redox active [2Fe-2S] cluster in the C-terminal domain. Only when oxygen level is high enough to maintain the cluster in its oxidized state can FBXL5 recruit IRP2 as a substrate for polyubiquination and degradation. Promotes ubiquitination and subsequent degradation of the dynactin complex component DCTN1. Within the nucleus, promotes the ubiquitination of SNAI1; preventing its interaction with DNA and promoting its degradation. Negatively regulates DNA damage response by mediating the ubiquitin-proteasome degradation of the DNA repair protein NABP2.</text>
</comment>
<comment type="cofactor">
    <cofactor evidence="2">
        <name>[2Fe-2S] cluster</name>
        <dbReference type="ChEBI" id="CHEBI:190135"/>
    </cofactor>
</comment>
<comment type="activity regulation">
    <text evidence="2">An iron-sulfur cluster promotes IRP2 polyubiquitination and degradation in response to both iron and oxygen concentrations.</text>
</comment>
<comment type="pathway">
    <text>Protein modification; protein ubiquitination.</text>
</comment>
<comment type="subunit">
    <text evidence="2">Part of a SCF (SKP1-cullin-F-box) protein ligase complex. Interacts with ACO1/IRP1, IREB2/IRP2; the interaction depends on the [2Fe-2S] cluster. Interacts with DCTN1/p150-glued.</text>
</comment>
<comment type="subcellular location">
    <subcellularLocation>
        <location evidence="2">Cytoplasm</location>
        <location evidence="2">Perinuclear region</location>
    </subcellularLocation>
    <subcellularLocation>
        <location evidence="2">Nucleus</location>
    </subcellularLocation>
</comment>
<comment type="domain">
    <text evidence="1">The hemerythrin-like region acts as an oxygen and iron sensor by binding oxygen through a diiron metal-center. In absence of oxygen and iron, the protein is ubiquitinated and degraded (By similarity).</text>
</comment>
<comment type="PTM">
    <text evidence="2">Polybiquitinated upon iron and oxygen depletion, leading to its degradation by the proteasome. Ubiquitination is regulated by the hemerythrin-like region that acts as an oxygen and iron sensor. Undergoes constitutive ubiquitin-dependent degradation at the steady state by HERC2.</text>
</comment>
<reference key="1">
    <citation type="submission" date="2004-11" db="EMBL/GenBank/DDBJ databases">
        <authorList>
            <consortium name="The German cDNA consortium"/>
        </authorList>
    </citation>
    <scope>NUCLEOTIDE SEQUENCE [LARGE SCALE MRNA]</scope>
</reference>